<name>G6PI_BACCZ</name>
<protein>
    <recommendedName>
        <fullName evidence="1">Glucose-6-phosphate isomerase</fullName>
        <shortName evidence="1">GPI</shortName>
        <ecNumber evidence="1">5.3.1.9</ecNumber>
    </recommendedName>
    <alternativeName>
        <fullName evidence="1">Phosphoglucose isomerase</fullName>
        <shortName evidence="1">PGI</shortName>
    </alternativeName>
    <alternativeName>
        <fullName evidence="1">Phosphohexose isomerase</fullName>
        <shortName evidence="1">PHI</shortName>
    </alternativeName>
</protein>
<accession>Q632G4</accession>
<sequence>MSTHVTFDYSKALSFIGEHEITYLRDAVKVTHHAIHEKTGAGNDFLGWVDLPLQYDKEEFARIQKCAEKIKNDSDILLVVGIGGSYLGARAAIEMLNHSFYNTLSKEQRKTPQVLFVGQNISSTYMKDLMDVLEGKDFSINVISKSGTTTEPALAFRIFRKLLEEKYGKEEARKRIYATTDKARGALKTLADNEGYETFVIPDDVGGRFSVLTPVGLLPIAVSGLNIEEMMKGAAAGRDDFGTSELEENPAYQYAVVRNALYNKGKTIEMLVNYEPALQYFAEWWKQLFGESEGKDQKGIFPSSANFSTDLHSLGQYVQEGRRDLFETVLKVGKSTHELTIESEENDLDGLNYLAGETVDFVNTKAYEGTLLAHSDGGVPNLIVNIPELNEYTFGYLVYFFEKACAMSGYLLGVNPFDQPGVEAYKKNMFALLGKPGFEELKAELEERLK</sequence>
<comment type="function">
    <text evidence="1">Catalyzes the reversible isomerization of glucose-6-phosphate to fructose-6-phosphate.</text>
</comment>
<comment type="catalytic activity">
    <reaction evidence="1">
        <text>alpha-D-glucose 6-phosphate = beta-D-fructose 6-phosphate</text>
        <dbReference type="Rhea" id="RHEA:11816"/>
        <dbReference type="ChEBI" id="CHEBI:57634"/>
        <dbReference type="ChEBI" id="CHEBI:58225"/>
        <dbReference type="EC" id="5.3.1.9"/>
    </reaction>
</comment>
<comment type="pathway">
    <text evidence="1">Carbohydrate biosynthesis; gluconeogenesis.</text>
</comment>
<comment type="pathway">
    <text evidence="1">Carbohydrate degradation; glycolysis; D-glyceraldehyde 3-phosphate and glycerone phosphate from D-glucose: step 2/4.</text>
</comment>
<comment type="subcellular location">
    <subcellularLocation>
        <location evidence="1">Cytoplasm</location>
    </subcellularLocation>
</comment>
<comment type="similarity">
    <text evidence="1">Belongs to the GPI family.</text>
</comment>
<feature type="chain" id="PRO_0000180587" description="Glucose-6-phosphate isomerase">
    <location>
        <begin position="1"/>
        <end position="450"/>
    </location>
</feature>
<feature type="active site" description="Proton donor" evidence="1">
    <location>
        <position position="291"/>
    </location>
</feature>
<feature type="active site" evidence="1">
    <location>
        <position position="312"/>
    </location>
</feature>
<feature type="active site" evidence="1">
    <location>
        <position position="426"/>
    </location>
</feature>
<feature type="modified residue" description="Phosphothreonine" evidence="1">
    <location>
        <position position="39"/>
    </location>
</feature>
<proteinExistence type="inferred from homology"/>
<reference key="1">
    <citation type="journal article" date="2006" name="J. Bacteriol.">
        <title>Pathogenomic sequence analysis of Bacillus cereus and Bacillus thuringiensis isolates closely related to Bacillus anthracis.</title>
        <authorList>
            <person name="Han C.S."/>
            <person name="Xie G."/>
            <person name="Challacombe J.F."/>
            <person name="Altherr M.R."/>
            <person name="Bhotika S.S."/>
            <person name="Bruce D."/>
            <person name="Campbell C.S."/>
            <person name="Campbell M.L."/>
            <person name="Chen J."/>
            <person name="Chertkov O."/>
            <person name="Cleland C."/>
            <person name="Dimitrijevic M."/>
            <person name="Doggett N.A."/>
            <person name="Fawcett J.J."/>
            <person name="Glavina T."/>
            <person name="Goodwin L.A."/>
            <person name="Hill K.K."/>
            <person name="Hitchcock P."/>
            <person name="Jackson P.J."/>
            <person name="Keim P."/>
            <person name="Kewalramani A.R."/>
            <person name="Longmire J."/>
            <person name="Lucas S."/>
            <person name="Malfatti S."/>
            <person name="McMurry K."/>
            <person name="Meincke L.J."/>
            <person name="Misra M."/>
            <person name="Moseman B.L."/>
            <person name="Mundt M."/>
            <person name="Munk A.C."/>
            <person name="Okinaka R.T."/>
            <person name="Parson-Quintana B."/>
            <person name="Reilly L.P."/>
            <person name="Richardson P."/>
            <person name="Robinson D.L."/>
            <person name="Rubin E."/>
            <person name="Saunders E."/>
            <person name="Tapia R."/>
            <person name="Tesmer J.G."/>
            <person name="Thayer N."/>
            <person name="Thompson L.S."/>
            <person name="Tice H."/>
            <person name="Ticknor L.O."/>
            <person name="Wills P.L."/>
            <person name="Brettin T.S."/>
            <person name="Gilna P."/>
        </authorList>
    </citation>
    <scope>NUCLEOTIDE SEQUENCE [LARGE SCALE GENOMIC DNA]</scope>
    <source>
        <strain>ZK / E33L</strain>
    </source>
</reference>
<gene>
    <name evidence="1" type="primary">pgi</name>
    <name type="ordered locus">BCE33L4630</name>
</gene>
<keyword id="KW-0963">Cytoplasm</keyword>
<keyword id="KW-0312">Gluconeogenesis</keyword>
<keyword id="KW-0324">Glycolysis</keyword>
<keyword id="KW-0413">Isomerase</keyword>
<keyword id="KW-0597">Phosphoprotein</keyword>
<organism>
    <name type="scientific">Bacillus cereus (strain ZK / E33L)</name>
    <dbReference type="NCBI Taxonomy" id="288681"/>
    <lineage>
        <taxon>Bacteria</taxon>
        <taxon>Bacillati</taxon>
        <taxon>Bacillota</taxon>
        <taxon>Bacilli</taxon>
        <taxon>Bacillales</taxon>
        <taxon>Bacillaceae</taxon>
        <taxon>Bacillus</taxon>
        <taxon>Bacillus cereus group</taxon>
    </lineage>
</organism>
<dbReference type="EC" id="5.3.1.9" evidence="1"/>
<dbReference type="EMBL" id="CP000001">
    <property type="protein sequence ID" value="AAU15645.1"/>
    <property type="molecule type" value="Genomic_DNA"/>
</dbReference>
<dbReference type="RefSeq" id="WP_000103658.1">
    <property type="nucleotide sequence ID" value="NZ_CP009968.1"/>
</dbReference>
<dbReference type="SMR" id="Q632G4"/>
<dbReference type="KEGG" id="bcz:BCE33L4630"/>
<dbReference type="PATRIC" id="fig|288681.22.peg.730"/>
<dbReference type="UniPathway" id="UPA00109">
    <property type="reaction ID" value="UER00181"/>
</dbReference>
<dbReference type="UniPathway" id="UPA00138"/>
<dbReference type="Proteomes" id="UP000002612">
    <property type="component" value="Chromosome"/>
</dbReference>
<dbReference type="GO" id="GO:0005829">
    <property type="term" value="C:cytosol"/>
    <property type="evidence" value="ECO:0007669"/>
    <property type="project" value="TreeGrafter"/>
</dbReference>
<dbReference type="GO" id="GO:0097367">
    <property type="term" value="F:carbohydrate derivative binding"/>
    <property type="evidence" value="ECO:0007669"/>
    <property type="project" value="InterPro"/>
</dbReference>
<dbReference type="GO" id="GO:0004347">
    <property type="term" value="F:glucose-6-phosphate isomerase activity"/>
    <property type="evidence" value="ECO:0007669"/>
    <property type="project" value="UniProtKB-UniRule"/>
</dbReference>
<dbReference type="GO" id="GO:0048029">
    <property type="term" value="F:monosaccharide binding"/>
    <property type="evidence" value="ECO:0007669"/>
    <property type="project" value="TreeGrafter"/>
</dbReference>
<dbReference type="GO" id="GO:0006094">
    <property type="term" value="P:gluconeogenesis"/>
    <property type="evidence" value="ECO:0007669"/>
    <property type="project" value="UniProtKB-UniRule"/>
</dbReference>
<dbReference type="GO" id="GO:0051156">
    <property type="term" value="P:glucose 6-phosphate metabolic process"/>
    <property type="evidence" value="ECO:0007669"/>
    <property type="project" value="TreeGrafter"/>
</dbReference>
<dbReference type="GO" id="GO:0006096">
    <property type="term" value="P:glycolytic process"/>
    <property type="evidence" value="ECO:0007669"/>
    <property type="project" value="UniProtKB-UniRule"/>
</dbReference>
<dbReference type="CDD" id="cd05015">
    <property type="entry name" value="SIS_PGI_1"/>
    <property type="match status" value="1"/>
</dbReference>
<dbReference type="CDD" id="cd05016">
    <property type="entry name" value="SIS_PGI_2"/>
    <property type="match status" value="1"/>
</dbReference>
<dbReference type="FunFam" id="3.40.50.10490:FF:000015">
    <property type="entry name" value="Glucose-6-phosphate isomerase"/>
    <property type="match status" value="1"/>
</dbReference>
<dbReference type="FunFam" id="3.40.50.10490:FF:000016">
    <property type="entry name" value="Glucose-6-phosphate isomerase"/>
    <property type="match status" value="1"/>
</dbReference>
<dbReference type="FunFam" id="3.40.50.10490:FF:000020">
    <property type="entry name" value="Glucose-6-phosphate isomerase"/>
    <property type="match status" value="1"/>
</dbReference>
<dbReference type="Gene3D" id="3.40.50.10490">
    <property type="entry name" value="Glucose-6-phosphate isomerase like protein, domain 1"/>
    <property type="match status" value="3"/>
</dbReference>
<dbReference type="HAMAP" id="MF_00473">
    <property type="entry name" value="G6P_isomerase"/>
    <property type="match status" value="1"/>
</dbReference>
<dbReference type="InterPro" id="IPR001672">
    <property type="entry name" value="G6P_Isomerase"/>
</dbReference>
<dbReference type="InterPro" id="IPR018189">
    <property type="entry name" value="Phosphoglucose_isomerase_CS"/>
</dbReference>
<dbReference type="InterPro" id="IPR046348">
    <property type="entry name" value="SIS_dom_sf"/>
</dbReference>
<dbReference type="InterPro" id="IPR035476">
    <property type="entry name" value="SIS_PGI_1"/>
</dbReference>
<dbReference type="InterPro" id="IPR035482">
    <property type="entry name" value="SIS_PGI_2"/>
</dbReference>
<dbReference type="NCBIfam" id="NF010697">
    <property type="entry name" value="PRK14097.1"/>
    <property type="match status" value="1"/>
</dbReference>
<dbReference type="PANTHER" id="PTHR11469">
    <property type="entry name" value="GLUCOSE-6-PHOSPHATE ISOMERASE"/>
    <property type="match status" value="1"/>
</dbReference>
<dbReference type="PANTHER" id="PTHR11469:SF1">
    <property type="entry name" value="GLUCOSE-6-PHOSPHATE ISOMERASE"/>
    <property type="match status" value="1"/>
</dbReference>
<dbReference type="Pfam" id="PF00342">
    <property type="entry name" value="PGI"/>
    <property type="match status" value="1"/>
</dbReference>
<dbReference type="PRINTS" id="PR00662">
    <property type="entry name" value="G6PISOMERASE"/>
</dbReference>
<dbReference type="SUPFAM" id="SSF53697">
    <property type="entry name" value="SIS domain"/>
    <property type="match status" value="1"/>
</dbReference>
<dbReference type="PROSITE" id="PS00765">
    <property type="entry name" value="P_GLUCOSE_ISOMERASE_1"/>
    <property type="match status" value="1"/>
</dbReference>
<dbReference type="PROSITE" id="PS00174">
    <property type="entry name" value="P_GLUCOSE_ISOMERASE_2"/>
    <property type="match status" value="1"/>
</dbReference>
<dbReference type="PROSITE" id="PS51463">
    <property type="entry name" value="P_GLUCOSE_ISOMERASE_3"/>
    <property type="match status" value="1"/>
</dbReference>
<evidence type="ECO:0000255" key="1">
    <source>
        <dbReference type="HAMAP-Rule" id="MF_00473"/>
    </source>
</evidence>